<protein>
    <recommendedName>
        <fullName>Steroid 17-alpha-hydroxylase/17,20 lyase</fullName>
        <ecNumber evidence="2">1.14.14.19</ecNumber>
    </recommendedName>
    <alternativeName>
        <fullName>17-alpha-hydroxyprogesterone aldolase</fullName>
        <ecNumber evidence="2">1.14.14.32</ecNumber>
    </alternativeName>
    <alternativeName>
        <fullName>CYPXVII</fullName>
    </alternativeName>
    <alternativeName>
        <fullName>Cytochrome P450 17A1</fullName>
    </alternativeName>
    <alternativeName>
        <fullName>Cytochrome P450-C17</fullName>
        <shortName>Cytochrome P450c17</shortName>
    </alternativeName>
    <alternativeName>
        <fullName>Steroid 17-alpha-monooxygenase</fullName>
    </alternativeName>
</protein>
<gene>
    <name type="primary">CYP17A1</name>
    <name type="synonym">CYP17</name>
</gene>
<evidence type="ECO:0000250" key="1"/>
<evidence type="ECO:0000250" key="2">
    <source>
        <dbReference type="UniProtKB" id="P05093"/>
    </source>
</evidence>
<evidence type="ECO:0000305" key="3"/>
<name>CP17A_CAPHI</name>
<feature type="chain" id="PRO_0000051927" description="Steroid 17-alpha-hydroxylase/17,20 lyase">
    <location>
        <begin position="1"/>
        <end position="509"/>
    </location>
</feature>
<feature type="binding site" evidence="2">
    <location>
        <position position="202"/>
    </location>
    <ligand>
        <name>substrate</name>
    </ligand>
</feature>
<feature type="binding site" description="axial binding residue" evidence="1">
    <location>
        <position position="442"/>
    </location>
    <ligand>
        <name>heme</name>
        <dbReference type="ChEBI" id="CHEBI:30413"/>
    </ligand>
    <ligandPart>
        <name>Fe</name>
        <dbReference type="ChEBI" id="CHEBI:18248"/>
    </ligandPart>
</feature>
<keyword id="KW-0256">Endoplasmic reticulum</keyword>
<keyword id="KW-0349">Heme</keyword>
<keyword id="KW-0408">Iron</keyword>
<keyword id="KW-0443">Lipid metabolism</keyword>
<keyword id="KW-0456">Lyase</keyword>
<keyword id="KW-0472">Membrane</keyword>
<keyword id="KW-0479">Metal-binding</keyword>
<keyword id="KW-0492">Microsome</keyword>
<keyword id="KW-0503">Monooxygenase</keyword>
<keyword id="KW-0560">Oxidoreductase</keyword>
<keyword id="KW-1185">Reference proteome</keyword>
<keyword id="KW-0755">Steroidogenesis</keyword>
<organism>
    <name type="scientific">Capra hircus</name>
    <name type="common">Goat</name>
    <dbReference type="NCBI Taxonomy" id="9925"/>
    <lineage>
        <taxon>Eukaryota</taxon>
        <taxon>Metazoa</taxon>
        <taxon>Chordata</taxon>
        <taxon>Craniata</taxon>
        <taxon>Vertebrata</taxon>
        <taxon>Euteleostomi</taxon>
        <taxon>Mammalia</taxon>
        <taxon>Eutheria</taxon>
        <taxon>Laurasiatheria</taxon>
        <taxon>Artiodactyla</taxon>
        <taxon>Ruminantia</taxon>
        <taxon>Pecora</taxon>
        <taxon>Bovidae</taxon>
        <taxon>Caprinae</taxon>
        <taxon>Capra</taxon>
    </lineage>
</organism>
<comment type="function">
    <text evidence="2">A cytochrome P450 monooxygenase involved in corticoid and androgen biosynthesis. Catalyzes 17-alpha hydroxylation of C21 steroids, which is common for both pathways. A second oxidative step, required only for androgen synthesis, involves an acyl-carbon cleavage. The 17-alpha hydroxy intermediates, as part of adrenal glucocorticoids biosynthesis pathway, are precursors of cortisol. Hydroxylates steroid hormones, pregnenolone and progesterone to form 17-alpha hydroxy metabolites, followed by the cleavage of the C17-C20 bond to form C19 steroids, dehydroepiandrosterone (DHEA) and androstenedione. Has 16-alpha hydroxylase activity. Catalyzes 16-alpha hydroxylation of 17-alpha hydroxy pregnenolone, followed by the cleavage of the C17-C20 bond to form 16-alpha-hydroxy DHEA. Also 16-alpha hydroxylates androgens, relevant for estriol synthesis. Mechanistically, uses molecular oxygen inserting one oxygen atom into a substrate, and reducing the second into a water molecule, with two electrons provided by NADPH via cytochrome P450 reductase (CPR; NADPH-ferrihemoprotein reductase).</text>
</comment>
<comment type="catalytic activity">
    <reaction evidence="2">
        <text>a C21-steroid + reduced [NADPH--hemoprotein reductase] + O2 = a 17alpha-hydroxy-C21-steroid + oxidized [NADPH--hemoprotein reductase] + H2O + H(+)</text>
        <dbReference type="Rhea" id="RHEA:65760"/>
        <dbReference type="Rhea" id="RHEA-COMP:11964"/>
        <dbReference type="Rhea" id="RHEA-COMP:11965"/>
        <dbReference type="ChEBI" id="CHEBI:15377"/>
        <dbReference type="ChEBI" id="CHEBI:15378"/>
        <dbReference type="ChEBI" id="CHEBI:15379"/>
        <dbReference type="ChEBI" id="CHEBI:57618"/>
        <dbReference type="ChEBI" id="CHEBI:58210"/>
        <dbReference type="ChEBI" id="CHEBI:61313"/>
        <dbReference type="ChEBI" id="CHEBI:138141"/>
        <dbReference type="EC" id="1.14.14.19"/>
    </reaction>
    <physiologicalReaction direction="left-to-right" evidence="2">
        <dbReference type="Rhea" id="RHEA:65761"/>
    </physiologicalReaction>
</comment>
<comment type="catalytic activity">
    <reaction evidence="2">
        <text>progesterone + reduced [NADPH--hemoprotein reductase] + O2 = 17alpha-hydroxyprogesterone + oxidized [NADPH--hemoprotein reductase] + H2O + H(+)</text>
        <dbReference type="Rhea" id="RHEA:46308"/>
        <dbReference type="Rhea" id="RHEA-COMP:11964"/>
        <dbReference type="Rhea" id="RHEA-COMP:11965"/>
        <dbReference type="ChEBI" id="CHEBI:15377"/>
        <dbReference type="ChEBI" id="CHEBI:15378"/>
        <dbReference type="ChEBI" id="CHEBI:15379"/>
        <dbReference type="ChEBI" id="CHEBI:17026"/>
        <dbReference type="ChEBI" id="CHEBI:17252"/>
        <dbReference type="ChEBI" id="CHEBI:57618"/>
        <dbReference type="ChEBI" id="CHEBI:58210"/>
        <dbReference type="EC" id="1.14.14.19"/>
    </reaction>
    <physiologicalReaction direction="left-to-right" evidence="2">
        <dbReference type="Rhea" id="RHEA:46309"/>
    </physiologicalReaction>
</comment>
<comment type="catalytic activity">
    <reaction evidence="2">
        <text>pregnenolone + reduced [NADPH--hemoprotein reductase] + O2 = 17alpha-hydroxypregnenolone + oxidized [NADPH--hemoprotein reductase] + H2O + H(+)</text>
        <dbReference type="Rhea" id="RHEA:50236"/>
        <dbReference type="Rhea" id="RHEA-COMP:11964"/>
        <dbReference type="Rhea" id="RHEA-COMP:11965"/>
        <dbReference type="ChEBI" id="CHEBI:15377"/>
        <dbReference type="ChEBI" id="CHEBI:15378"/>
        <dbReference type="ChEBI" id="CHEBI:15379"/>
        <dbReference type="ChEBI" id="CHEBI:16581"/>
        <dbReference type="ChEBI" id="CHEBI:28750"/>
        <dbReference type="ChEBI" id="CHEBI:57618"/>
        <dbReference type="ChEBI" id="CHEBI:58210"/>
        <dbReference type="EC" id="1.14.14.19"/>
    </reaction>
    <physiologicalReaction direction="left-to-right" evidence="2">
        <dbReference type="Rhea" id="RHEA:50237"/>
    </physiologicalReaction>
</comment>
<comment type="catalytic activity">
    <reaction evidence="2">
        <text>17alpha-hydroxyprogesterone + reduced [NADPH--hemoprotein reductase] + O2 = androst-4-ene-3,17-dione + acetate + oxidized [NADPH--hemoprotein reductase] + H2O + 2 H(+)</text>
        <dbReference type="Rhea" id="RHEA:14753"/>
        <dbReference type="Rhea" id="RHEA-COMP:11964"/>
        <dbReference type="Rhea" id="RHEA-COMP:11965"/>
        <dbReference type="ChEBI" id="CHEBI:15377"/>
        <dbReference type="ChEBI" id="CHEBI:15378"/>
        <dbReference type="ChEBI" id="CHEBI:15379"/>
        <dbReference type="ChEBI" id="CHEBI:16422"/>
        <dbReference type="ChEBI" id="CHEBI:17252"/>
        <dbReference type="ChEBI" id="CHEBI:30089"/>
        <dbReference type="ChEBI" id="CHEBI:57618"/>
        <dbReference type="ChEBI" id="CHEBI:58210"/>
        <dbReference type="EC" id="1.14.14.32"/>
    </reaction>
    <physiologicalReaction direction="left-to-right" evidence="2">
        <dbReference type="Rhea" id="RHEA:14754"/>
    </physiologicalReaction>
</comment>
<comment type="catalytic activity">
    <reaction evidence="2">
        <text>17alpha-hydroxyprogesterone + reduced [NADPH--hemoprotein reductase] + O2 = 16alpha,17alpha-dihydroxyprogesterone + oxidized [NADPH--hemoprotein reductase] + H2O + H(+)</text>
        <dbReference type="Rhea" id="RHEA:53216"/>
        <dbReference type="Rhea" id="RHEA-COMP:11964"/>
        <dbReference type="Rhea" id="RHEA-COMP:11965"/>
        <dbReference type="ChEBI" id="CHEBI:763"/>
        <dbReference type="ChEBI" id="CHEBI:15377"/>
        <dbReference type="ChEBI" id="CHEBI:15378"/>
        <dbReference type="ChEBI" id="CHEBI:15379"/>
        <dbReference type="ChEBI" id="CHEBI:17252"/>
        <dbReference type="ChEBI" id="CHEBI:57618"/>
        <dbReference type="ChEBI" id="CHEBI:58210"/>
    </reaction>
    <physiologicalReaction direction="left-to-right" evidence="2">
        <dbReference type="Rhea" id="RHEA:53217"/>
    </physiologicalReaction>
</comment>
<comment type="catalytic activity">
    <reaction evidence="2">
        <text>16alpha,17alpha-dihydroxyprogesterone + reduced [NADPH--hemoprotein reductase] + O2 = 6beta,16alpha,17alpha-trihydroxyprogesterone + oxidized [NADPH--hemoprotein reductase] + H2O + H(+)</text>
        <dbReference type="Rhea" id="RHEA:53220"/>
        <dbReference type="Rhea" id="RHEA-COMP:11964"/>
        <dbReference type="Rhea" id="RHEA-COMP:11965"/>
        <dbReference type="ChEBI" id="CHEBI:763"/>
        <dbReference type="ChEBI" id="CHEBI:15377"/>
        <dbReference type="ChEBI" id="CHEBI:15378"/>
        <dbReference type="ChEBI" id="CHEBI:15379"/>
        <dbReference type="ChEBI" id="CHEBI:57618"/>
        <dbReference type="ChEBI" id="CHEBI:58210"/>
        <dbReference type="ChEBI" id="CHEBI:137046"/>
    </reaction>
    <physiologicalReaction direction="left-to-right" evidence="2">
        <dbReference type="Rhea" id="RHEA:53221"/>
    </physiologicalReaction>
</comment>
<comment type="catalytic activity">
    <reaction evidence="2">
        <text>17alpha-hydroxypregnenolone + reduced [NADPH--hemoprotein reductase] + O2 = 3beta-hydroxyandrost-5-en-17-one + acetate + oxidized [NADPH--hemoprotein reductase] + H2O + 2 H(+)</text>
        <dbReference type="Rhea" id="RHEA:50244"/>
        <dbReference type="Rhea" id="RHEA-COMP:11964"/>
        <dbReference type="Rhea" id="RHEA-COMP:11965"/>
        <dbReference type="ChEBI" id="CHEBI:15377"/>
        <dbReference type="ChEBI" id="CHEBI:15378"/>
        <dbReference type="ChEBI" id="CHEBI:15379"/>
        <dbReference type="ChEBI" id="CHEBI:28689"/>
        <dbReference type="ChEBI" id="CHEBI:28750"/>
        <dbReference type="ChEBI" id="CHEBI:30089"/>
        <dbReference type="ChEBI" id="CHEBI:57618"/>
        <dbReference type="ChEBI" id="CHEBI:58210"/>
        <dbReference type="EC" id="1.14.14.32"/>
    </reaction>
    <physiologicalReaction direction="left-to-right" evidence="2">
        <dbReference type="Rhea" id="RHEA:50245"/>
    </physiologicalReaction>
</comment>
<comment type="catalytic activity">
    <reaction evidence="2">
        <text>16alpha,17alpha-dihydroxypregnenolone + reduced [NADPH--hemoprotein reductase] + O2 = 3beta,16alpha-dihydroxy-androst-5-en-17-one + acetate + oxidized [NADPH--hemoprotein reductase] + H2O + 2 H(+)</text>
        <dbReference type="Rhea" id="RHEA:53224"/>
        <dbReference type="Rhea" id="RHEA-COMP:11964"/>
        <dbReference type="Rhea" id="RHEA-COMP:11965"/>
        <dbReference type="ChEBI" id="CHEBI:15377"/>
        <dbReference type="ChEBI" id="CHEBI:15378"/>
        <dbReference type="ChEBI" id="CHEBI:15379"/>
        <dbReference type="ChEBI" id="CHEBI:27771"/>
        <dbReference type="ChEBI" id="CHEBI:30089"/>
        <dbReference type="ChEBI" id="CHEBI:57618"/>
        <dbReference type="ChEBI" id="CHEBI:58210"/>
        <dbReference type="ChEBI" id="CHEBI:137049"/>
    </reaction>
    <physiologicalReaction direction="left-to-right" evidence="2">
        <dbReference type="Rhea" id="RHEA:53225"/>
    </physiologicalReaction>
</comment>
<comment type="catalytic activity">
    <reaction evidence="2">
        <text>3beta-hydroxyandrost-5-en-17-one + reduced [NADPH--hemoprotein reductase] + O2 = 3beta,16alpha-dihydroxy-androst-5-en-17-one + oxidized [NADPH--hemoprotein reductase] + H2O + H(+)</text>
        <dbReference type="Rhea" id="RHEA:47220"/>
        <dbReference type="Rhea" id="RHEA-COMP:11964"/>
        <dbReference type="Rhea" id="RHEA-COMP:11965"/>
        <dbReference type="ChEBI" id="CHEBI:15377"/>
        <dbReference type="ChEBI" id="CHEBI:15378"/>
        <dbReference type="ChEBI" id="CHEBI:15379"/>
        <dbReference type="ChEBI" id="CHEBI:27771"/>
        <dbReference type="ChEBI" id="CHEBI:28689"/>
        <dbReference type="ChEBI" id="CHEBI:57618"/>
        <dbReference type="ChEBI" id="CHEBI:58210"/>
    </reaction>
    <physiologicalReaction direction="left-to-right" evidence="2">
        <dbReference type="Rhea" id="RHEA:47221"/>
    </physiologicalReaction>
</comment>
<comment type="catalytic activity">
    <reaction evidence="2">
        <text>androst-4-ene-3,17-dione + reduced [NADPH--hemoprotein reductase] + O2 = 16alpha-hydroxyandrost-4-ene-3,17-dione + oxidized [NADPH--hemoprotein reductase] + H2O + H(+)</text>
        <dbReference type="Rhea" id="RHEA:53228"/>
        <dbReference type="Rhea" id="RHEA-COMP:11964"/>
        <dbReference type="Rhea" id="RHEA-COMP:11965"/>
        <dbReference type="ChEBI" id="CHEBI:15377"/>
        <dbReference type="ChEBI" id="CHEBI:15378"/>
        <dbReference type="ChEBI" id="CHEBI:15379"/>
        <dbReference type="ChEBI" id="CHEBI:16422"/>
        <dbReference type="ChEBI" id="CHEBI:27582"/>
        <dbReference type="ChEBI" id="CHEBI:57618"/>
        <dbReference type="ChEBI" id="CHEBI:58210"/>
    </reaction>
    <physiologicalReaction direction="left-to-right" evidence="2">
        <dbReference type="Rhea" id="RHEA:53229"/>
    </physiologicalReaction>
</comment>
<comment type="cofactor">
    <cofactor evidence="2">
        <name>heme</name>
        <dbReference type="ChEBI" id="CHEBI:30413"/>
    </cofactor>
</comment>
<comment type="activity regulation">
    <text evidence="2">Regulated predominantly by intracellular cAMP levels. The 17,20-lyase activity is stimulated by cytochrome b5, which acts as an allosteric effector increasing the Vmax of the lyase activity.</text>
</comment>
<comment type="pathway">
    <text evidence="2">Steroid hormone biosynthesis.</text>
</comment>
<comment type="pathway">
    <text evidence="2">Steroid biosynthesis; glucocorticoid biosynthesis.</text>
</comment>
<comment type="subcellular location">
    <subcellularLocation>
        <location evidence="2">Endoplasmic reticulum membrane</location>
    </subcellularLocation>
    <subcellularLocation>
        <location evidence="2">Microsome membrane</location>
    </subcellularLocation>
</comment>
<comment type="similarity">
    <text evidence="3">Belongs to the cytochrome P450 family.</text>
</comment>
<accession>Q9N0U7</accession>
<sequence>MWVLLGVFLLTLAYLFWPKTKHSAAKYPRSLPSLPLVGSLLFLPRRGQQHENFFKLQEKYGPIYSFRLGSKTTVMIGHHQLAREVLLKKGKEFSGRPKVATLDILSDNQKGIAFADHGAHWQLHRKLVLNAFALFKDGNLKLEKIINQEANVLCDFLATQHGQSIDLSEPLSLAVTNIISFICFNFSFKNEDPALKAIQNVNDGILEVLSKEILLDIFPALKIFPSKAMEKMKGCVETRNELLNEILEKCQENFTSDSITNLLHILMQAKVNADNNNAGPDQDSKLLSNRHMLATIADIFGAGVETTTSVIKWIVAYLLHHPSLKKRIQDSIDQNIGFNRTPTISDRNCLVLLEATIREVLRIRPVAPMLIPHKAIIDSSIGDLTIDKGTDVVVNLWALHHNEKEWQQPDLFMPERFLDPTGTQLISPSLSYLPFGAGPRSCVGEMLARQELFLFMSRLLQRFNLEIPDDGKLPSLEGNPSLVLQIKPFKVKIEVRQAWKEAQAEGSTS</sequence>
<proteinExistence type="evidence at transcript level"/>
<dbReference type="EC" id="1.14.14.19" evidence="2"/>
<dbReference type="EC" id="1.14.14.32" evidence="2"/>
<dbReference type="EMBL" id="AF251387">
    <property type="protein sequence ID" value="AAF65823.1"/>
    <property type="molecule type" value="mRNA"/>
</dbReference>
<dbReference type="RefSeq" id="NP_001301074.1">
    <property type="nucleotide sequence ID" value="NM_001314145.1"/>
</dbReference>
<dbReference type="SMR" id="Q9N0U7"/>
<dbReference type="STRING" id="9925.ENSCHIP00000013932"/>
<dbReference type="Ensembl" id="ENSCHIT00000021725.1">
    <property type="protein sequence ID" value="ENSCHIP00000013932.1"/>
    <property type="gene ID" value="ENSCHIG00000015158.1"/>
</dbReference>
<dbReference type="Ensembl" id="ENSCHIT00040019784">
    <property type="protein sequence ID" value="ENSCHIP00040015275"/>
    <property type="gene ID" value="ENSCHIG00040009067"/>
</dbReference>
<dbReference type="GeneID" id="102182663"/>
<dbReference type="KEGG" id="chx:102182663"/>
<dbReference type="CTD" id="102182663"/>
<dbReference type="VGNC" id="VGNC:103465">
    <property type="gene designation" value="CYP17A1A"/>
</dbReference>
<dbReference type="GeneTree" id="ENSGT00940000155588"/>
<dbReference type="OMA" id="IISRCVI"/>
<dbReference type="OrthoDB" id="1470350at2759"/>
<dbReference type="UniPathway" id="UPA00788"/>
<dbReference type="Proteomes" id="UP000291000">
    <property type="component" value="Chromosome 26"/>
</dbReference>
<dbReference type="Proteomes" id="UP000694566">
    <property type="component" value="Unplaced"/>
</dbReference>
<dbReference type="Bgee" id="ENSCHIG00000015158">
    <property type="expression patterns" value="Expressed in adrenal gland and 11 other cell types or tissues"/>
</dbReference>
<dbReference type="GO" id="GO:0005789">
    <property type="term" value="C:endoplasmic reticulum membrane"/>
    <property type="evidence" value="ECO:0007669"/>
    <property type="project" value="UniProtKB-SubCell"/>
</dbReference>
<dbReference type="GO" id="GO:0020037">
    <property type="term" value="F:heme binding"/>
    <property type="evidence" value="ECO:0000250"/>
    <property type="project" value="UniProtKB"/>
</dbReference>
<dbReference type="GO" id="GO:0005506">
    <property type="term" value="F:iron ion binding"/>
    <property type="evidence" value="ECO:0007669"/>
    <property type="project" value="InterPro"/>
</dbReference>
<dbReference type="GO" id="GO:0016829">
    <property type="term" value="F:lyase activity"/>
    <property type="evidence" value="ECO:0007669"/>
    <property type="project" value="UniProtKB-KW"/>
</dbReference>
<dbReference type="GO" id="GO:0004508">
    <property type="term" value="F:steroid 17-alpha-monooxygenase activity"/>
    <property type="evidence" value="ECO:0000250"/>
    <property type="project" value="UniProtKB"/>
</dbReference>
<dbReference type="GO" id="GO:0006704">
    <property type="term" value="P:glucocorticoid biosynthetic process"/>
    <property type="evidence" value="ECO:0007669"/>
    <property type="project" value="UniProtKB-UniPathway"/>
</dbReference>
<dbReference type="GO" id="GO:0042446">
    <property type="term" value="P:hormone biosynthetic process"/>
    <property type="evidence" value="ECO:0000250"/>
    <property type="project" value="UniProtKB"/>
</dbReference>
<dbReference type="GO" id="GO:0042448">
    <property type="term" value="P:progesterone metabolic process"/>
    <property type="evidence" value="ECO:0000250"/>
    <property type="project" value="UniProtKB"/>
</dbReference>
<dbReference type="GO" id="GO:0008202">
    <property type="term" value="P:steroid metabolic process"/>
    <property type="evidence" value="ECO:0000250"/>
    <property type="project" value="UniProtKB"/>
</dbReference>
<dbReference type="CDD" id="cd20673">
    <property type="entry name" value="CYP17A1"/>
    <property type="match status" value="1"/>
</dbReference>
<dbReference type="FunFam" id="1.10.630.10:FF:000002">
    <property type="entry name" value="Cytochrome P450 1A1"/>
    <property type="match status" value="1"/>
</dbReference>
<dbReference type="Gene3D" id="1.10.630.10">
    <property type="entry name" value="Cytochrome P450"/>
    <property type="match status" value="1"/>
</dbReference>
<dbReference type="InterPro" id="IPR001128">
    <property type="entry name" value="Cyt_P450"/>
</dbReference>
<dbReference type="InterPro" id="IPR017972">
    <property type="entry name" value="Cyt_P450_CS"/>
</dbReference>
<dbReference type="InterPro" id="IPR002401">
    <property type="entry name" value="Cyt_P450_E_grp-I"/>
</dbReference>
<dbReference type="InterPro" id="IPR036396">
    <property type="entry name" value="Cyt_P450_sf"/>
</dbReference>
<dbReference type="PANTHER" id="PTHR24289">
    <property type="entry name" value="STEROID 17-ALPHA-HYDROXYLASE/17,20 LYASE"/>
    <property type="match status" value="1"/>
</dbReference>
<dbReference type="PANTHER" id="PTHR24289:SF13">
    <property type="entry name" value="STEROID 17-ALPHA-HYDROXYLASE_17,20 LYASE"/>
    <property type="match status" value="1"/>
</dbReference>
<dbReference type="Pfam" id="PF00067">
    <property type="entry name" value="p450"/>
    <property type="match status" value="1"/>
</dbReference>
<dbReference type="PRINTS" id="PR00463">
    <property type="entry name" value="EP450I"/>
</dbReference>
<dbReference type="PRINTS" id="PR00385">
    <property type="entry name" value="P450"/>
</dbReference>
<dbReference type="SUPFAM" id="SSF48264">
    <property type="entry name" value="Cytochrome P450"/>
    <property type="match status" value="1"/>
</dbReference>
<dbReference type="PROSITE" id="PS00086">
    <property type="entry name" value="CYTOCHROME_P450"/>
    <property type="match status" value="1"/>
</dbReference>
<reference key="1">
    <citation type="journal article" date="2003" name="Biochemistry (Mosc.)">
        <title>Molecular cloning and heterologous expression in E. coli of cytochrome P45017alpha. Comparison of structural and functional properties of substrate-specific cytochromes P450 from different species.</title>
        <authorList>
            <person name="Gilep A.A."/>
            <person name="Estabrook R.W."/>
            <person name="Usanov S.A."/>
        </authorList>
    </citation>
    <scope>NUCLEOTIDE SEQUENCE [MRNA]</scope>
    <source>
        <tissue>Adrenal gland</tissue>
    </source>
</reference>